<keyword id="KW-0687">Ribonucleoprotein</keyword>
<keyword id="KW-0689">Ribosomal protein</keyword>
<keyword id="KW-0694">RNA-binding</keyword>
<keyword id="KW-0699">rRNA-binding</keyword>
<proteinExistence type="inferred from homology"/>
<comment type="function">
    <text evidence="1">Protein S19 forms a complex with S13 that binds strongly to the 16S ribosomal RNA.</text>
</comment>
<comment type="similarity">
    <text evidence="1">Belongs to the universal ribosomal protein uS19 family.</text>
</comment>
<gene>
    <name evidence="1" type="primary">rpsS</name>
    <name type="ordered locus">CTLon_0781</name>
</gene>
<name>RS19_CHLTB</name>
<feature type="chain" id="PRO_1000127950" description="Small ribosomal subunit protein uS19">
    <location>
        <begin position="1"/>
        <end position="88"/>
    </location>
</feature>
<evidence type="ECO:0000255" key="1">
    <source>
        <dbReference type="HAMAP-Rule" id="MF_00531"/>
    </source>
</evidence>
<evidence type="ECO:0000305" key="2"/>
<dbReference type="EMBL" id="AM884177">
    <property type="protein sequence ID" value="CAP07178.1"/>
    <property type="molecule type" value="Genomic_DNA"/>
</dbReference>
<dbReference type="RefSeq" id="WP_009871888.1">
    <property type="nucleotide sequence ID" value="NC_010280.2"/>
</dbReference>
<dbReference type="SMR" id="B0BCG3"/>
<dbReference type="GeneID" id="93065363"/>
<dbReference type="KEGG" id="ctl:CTLon_0781"/>
<dbReference type="HOGENOM" id="CLU_144911_0_1_0"/>
<dbReference type="Proteomes" id="UP001154401">
    <property type="component" value="Chromosome"/>
</dbReference>
<dbReference type="GO" id="GO:0005737">
    <property type="term" value="C:cytoplasm"/>
    <property type="evidence" value="ECO:0007669"/>
    <property type="project" value="UniProtKB-ARBA"/>
</dbReference>
<dbReference type="GO" id="GO:0015935">
    <property type="term" value="C:small ribosomal subunit"/>
    <property type="evidence" value="ECO:0007669"/>
    <property type="project" value="InterPro"/>
</dbReference>
<dbReference type="GO" id="GO:0019843">
    <property type="term" value="F:rRNA binding"/>
    <property type="evidence" value="ECO:0007669"/>
    <property type="project" value="UniProtKB-UniRule"/>
</dbReference>
<dbReference type="GO" id="GO:0003735">
    <property type="term" value="F:structural constituent of ribosome"/>
    <property type="evidence" value="ECO:0007669"/>
    <property type="project" value="InterPro"/>
</dbReference>
<dbReference type="GO" id="GO:0000028">
    <property type="term" value="P:ribosomal small subunit assembly"/>
    <property type="evidence" value="ECO:0007669"/>
    <property type="project" value="TreeGrafter"/>
</dbReference>
<dbReference type="GO" id="GO:0006412">
    <property type="term" value="P:translation"/>
    <property type="evidence" value="ECO:0007669"/>
    <property type="project" value="UniProtKB-UniRule"/>
</dbReference>
<dbReference type="FunFam" id="3.30.860.10:FF:000001">
    <property type="entry name" value="30S ribosomal protein S19"/>
    <property type="match status" value="1"/>
</dbReference>
<dbReference type="Gene3D" id="3.30.860.10">
    <property type="entry name" value="30s Ribosomal Protein S19, Chain A"/>
    <property type="match status" value="1"/>
</dbReference>
<dbReference type="HAMAP" id="MF_00531">
    <property type="entry name" value="Ribosomal_uS19"/>
    <property type="match status" value="1"/>
</dbReference>
<dbReference type="InterPro" id="IPR002222">
    <property type="entry name" value="Ribosomal_uS19"/>
</dbReference>
<dbReference type="InterPro" id="IPR005732">
    <property type="entry name" value="Ribosomal_uS19_bac-type"/>
</dbReference>
<dbReference type="InterPro" id="IPR020934">
    <property type="entry name" value="Ribosomal_uS19_CS"/>
</dbReference>
<dbReference type="InterPro" id="IPR023575">
    <property type="entry name" value="Ribosomal_uS19_SF"/>
</dbReference>
<dbReference type="NCBIfam" id="TIGR01050">
    <property type="entry name" value="rpsS_bact"/>
    <property type="match status" value="1"/>
</dbReference>
<dbReference type="PANTHER" id="PTHR11880">
    <property type="entry name" value="RIBOSOMAL PROTEIN S19P FAMILY MEMBER"/>
    <property type="match status" value="1"/>
</dbReference>
<dbReference type="PANTHER" id="PTHR11880:SF8">
    <property type="entry name" value="SMALL RIBOSOMAL SUBUNIT PROTEIN US19M"/>
    <property type="match status" value="1"/>
</dbReference>
<dbReference type="Pfam" id="PF00203">
    <property type="entry name" value="Ribosomal_S19"/>
    <property type="match status" value="1"/>
</dbReference>
<dbReference type="PIRSF" id="PIRSF002144">
    <property type="entry name" value="Ribosomal_S19"/>
    <property type="match status" value="1"/>
</dbReference>
<dbReference type="PRINTS" id="PR00975">
    <property type="entry name" value="RIBOSOMALS19"/>
</dbReference>
<dbReference type="SUPFAM" id="SSF54570">
    <property type="entry name" value="Ribosomal protein S19"/>
    <property type="match status" value="1"/>
</dbReference>
<dbReference type="PROSITE" id="PS00323">
    <property type="entry name" value="RIBOSOMAL_S19"/>
    <property type="match status" value="1"/>
</dbReference>
<organism>
    <name type="scientific">Chlamydia trachomatis serovar L2b (strain UCH-1/proctitis)</name>
    <dbReference type="NCBI Taxonomy" id="471473"/>
    <lineage>
        <taxon>Bacteria</taxon>
        <taxon>Pseudomonadati</taxon>
        <taxon>Chlamydiota</taxon>
        <taxon>Chlamydiia</taxon>
        <taxon>Chlamydiales</taxon>
        <taxon>Chlamydiaceae</taxon>
        <taxon>Chlamydia/Chlamydophila group</taxon>
        <taxon>Chlamydia</taxon>
    </lineage>
</organism>
<reference key="1">
    <citation type="journal article" date="2008" name="Genome Res.">
        <title>Chlamydia trachomatis: genome sequence analysis of lymphogranuloma venereum isolates.</title>
        <authorList>
            <person name="Thomson N.R."/>
            <person name="Holden M.T.G."/>
            <person name="Carder C."/>
            <person name="Lennard N."/>
            <person name="Lockey S.J."/>
            <person name="Marsh P."/>
            <person name="Skipp P."/>
            <person name="O'Connor C.D."/>
            <person name="Goodhead I."/>
            <person name="Norbertzcak H."/>
            <person name="Harris B."/>
            <person name="Ormond D."/>
            <person name="Rance R."/>
            <person name="Quail M.A."/>
            <person name="Parkhill J."/>
            <person name="Stephens R.S."/>
            <person name="Clarke I.N."/>
        </authorList>
    </citation>
    <scope>NUCLEOTIDE SEQUENCE [LARGE SCALE GENOMIC DNA]</scope>
    <source>
        <strain>UCH-1/proctitis</strain>
    </source>
</reference>
<accession>B0BCG3</accession>
<sequence length="88" mass="10233">MSRSLRKGPFVDHHLLKKVRDMNALEKKTPIKTWSRRSMITPEMIGHTFEVHNGRKFLTVFVSETMVGHKLGEFSPTRMFKSHPVKKG</sequence>
<protein>
    <recommendedName>
        <fullName evidence="1">Small ribosomal subunit protein uS19</fullName>
    </recommendedName>
    <alternativeName>
        <fullName evidence="2">30S ribosomal protein S19</fullName>
    </alternativeName>
</protein>